<evidence type="ECO:0000250" key="1"/>
<evidence type="ECO:0000255" key="2"/>
<evidence type="ECO:0000256" key="3">
    <source>
        <dbReference type="SAM" id="MobiDB-lite"/>
    </source>
</evidence>
<evidence type="ECO:0000305" key="4"/>
<accession>C5E2Q0</accession>
<sequence>MLSQYLRKHHLLSRRHQFMRCASQSRSPPRSLLQRQAKRRGEAEAVAPSQLIVTSLKDIFSTFQPSGFTQEDDELEAVKQREDAMQRLENGELRELLLHKFGARRIPSTTETGNSVGDLRIPPRNINQAFHNLTTQERELIEVFQSLGTPSMNWRDVPLVSKQLQFYISFGSYGPREGITFLGSKPEDFIWSKTSRRLLPGQTVRKLPKDATTNTWTCIPSRKANFERMKKGLDPGTRIIAWLGILIVMIASVRDYKQRRDSEATVKVSEFTEQETSEPQAAQQDTAPISKTPKSWYQFWKS</sequence>
<feature type="transit peptide" description="Mitochondrion" evidence="2">
    <location>
        <begin position="1"/>
        <end position="21"/>
    </location>
</feature>
<feature type="chain" id="PRO_0000399739" description="Genetic interactor of prohibitin 7, mitochondrial">
    <location>
        <begin position="22"/>
        <end position="302"/>
    </location>
</feature>
<feature type="transmembrane region" description="Helical" evidence="2">
    <location>
        <begin position="236"/>
        <end position="253"/>
    </location>
</feature>
<feature type="region of interest" description="Disordered" evidence="3">
    <location>
        <begin position="20"/>
        <end position="44"/>
    </location>
</feature>
<feature type="region of interest" description="Disordered" evidence="3">
    <location>
        <begin position="264"/>
        <end position="290"/>
    </location>
</feature>
<feature type="compositionally biased region" description="Polar residues" evidence="3">
    <location>
        <begin position="277"/>
        <end position="290"/>
    </location>
</feature>
<keyword id="KW-0472">Membrane</keyword>
<keyword id="KW-0496">Mitochondrion</keyword>
<keyword id="KW-1185">Reference proteome</keyword>
<keyword id="KW-0809">Transit peptide</keyword>
<keyword id="KW-0812">Transmembrane</keyword>
<keyword id="KW-1133">Transmembrane helix</keyword>
<reference key="1">
    <citation type="journal article" date="2009" name="Genome Res.">
        <title>Comparative genomics of protoploid Saccharomycetaceae.</title>
        <authorList>
            <consortium name="The Genolevures Consortium"/>
            <person name="Souciet J.-L."/>
            <person name="Dujon B."/>
            <person name="Gaillardin C."/>
            <person name="Johnston M."/>
            <person name="Baret P.V."/>
            <person name="Cliften P."/>
            <person name="Sherman D.J."/>
            <person name="Weissenbach J."/>
            <person name="Westhof E."/>
            <person name="Wincker P."/>
            <person name="Jubin C."/>
            <person name="Poulain J."/>
            <person name="Barbe V."/>
            <person name="Segurens B."/>
            <person name="Artiguenave F."/>
            <person name="Anthouard V."/>
            <person name="Vacherie B."/>
            <person name="Val M.-E."/>
            <person name="Fulton R.S."/>
            <person name="Minx P."/>
            <person name="Wilson R."/>
            <person name="Durrens P."/>
            <person name="Jean G."/>
            <person name="Marck C."/>
            <person name="Martin T."/>
            <person name="Nikolski M."/>
            <person name="Rolland T."/>
            <person name="Seret M.-L."/>
            <person name="Casaregola S."/>
            <person name="Despons L."/>
            <person name="Fairhead C."/>
            <person name="Fischer G."/>
            <person name="Lafontaine I."/>
            <person name="Leh V."/>
            <person name="Lemaire M."/>
            <person name="de Montigny J."/>
            <person name="Neuveglise C."/>
            <person name="Thierry A."/>
            <person name="Blanc-Lenfle I."/>
            <person name="Bleykasten C."/>
            <person name="Diffels J."/>
            <person name="Fritsch E."/>
            <person name="Frangeul L."/>
            <person name="Goeffon A."/>
            <person name="Jauniaux N."/>
            <person name="Kachouri-Lafond R."/>
            <person name="Payen C."/>
            <person name="Potier S."/>
            <person name="Pribylova L."/>
            <person name="Ozanne C."/>
            <person name="Richard G.-F."/>
            <person name="Sacerdot C."/>
            <person name="Straub M.-L."/>
            <person name="Talla E."/>
        </authorList>
    </citation>
    <scope>NUCLEOTIDE SEQUENCE [LARGE SCALE GENOMIC DNA]</scope>
    <source>
        <strain>ATCC 56472 / CBS 6340 / NRRL Y-8284</strain>
    </source>
</reference>
<gene>
    <name type="primary">GEP7</name>
    <name type="ordered locus">KLTH0H06754g</name>
</gene>
<protein>
    <recommendedName>
        <fullName>Genetic interactor of prohibitin 7, mitochondrial</fullName>
    </recommendedName>
</protein>
<name>GEP7_LACTC</name>
<dbReference type="EMBL" id="CU928180">
    <property type="protein sequence ID" value="CAR30311.1"/>
    <property type="molecule type" value="Genomic_DNA"/>
</dbReference>
<dbReference type="RefSeq" id="XP_002556173.1">
    <property type="nucleotide sequence ID" value="XM_002556127.1"/>
</dbReference>
<dbReference type="FunCoup" id="C5E2Q0">
    <property type="interactions" value="19"/>
</dbReference>
<dbReference type="GeneID" id="8294489"/>
<dbReference type="KEGG" id="lth:KLTH0H06754g"/>
<dbReference type="eggNOG" id="ENOG502S4Y0">
    <property type="taxonomic scope" value="Eukaryota"/>
</dbReference>
<dbReference type="HOGENOM" id="CLU_094335_0_0_1"/>
<dbReference type="InParanoid" id="C5E2Q0"/>
<dbReference type="OMA" id="DAMIHRE"/>
<dbReference type="OrthoDB" id="4069787at2759"/>
<dbReference type="Proteomes" id="UP000002036">
    <property type="component" value="Chromosome H"/>
</dbReference>
<dbReference type="GO" id="GO:0031966">
    <property type="term" value="C:mitochondrial membrane"/>
    <property type="evidence" value="ECO:0007669"/>
    <property type="project" value="UniProtKB-SubCell"/>
</dbReference>
<comment type="function">
    <text evidence="1">Involved in respiratory growth and required for cell survival in the absence of prohibitins.</text>
</comment>
<comment type="subcellular location">
    <subcellularLocation>
        <location evidence="1">Mitochondrion membrane</location>
        <topology evidence="1">Single-pass membrane protein</topology>
    </subcellularLocation>
</comment>
<comment type="similarity">
    <text evidence="4">Belongs to the GEP7 family.</text>
</comment>
<proteinExistence type="inferred from homology"/>
<organism>
    <name type="scientific">Lachancea thermotolerans (strain ATCC 56472 / CBS 6340 / NRRL Y-8284)</name>
    <name type="common">Yeast</name>
    <name type="synonym">Kluyveromyces thermotolerans</name>
    <dbReference type="NCBI Taxonomy" id="559295"/>
    <lineage>
        <taxon>Eukaryota</taxon>
        <taxon>Fungi</taxon>
        <taxon>Dikarya</taxon>
        <taxon>Ascomycota</taxon>
        <taxon>Saccharomycotina</taxon>
        <taxon>Saccharomycetes</taxon>
        <taxon>Saccharomycetales</taxon>
        <taxon>Saccharomycetaceae</taxon>
        <taxon>Lachancea</taxon>
    </lineage>
</organism>